<comment type="function">
    <text evidence="1">Catalyzes the formation of S-adenosylmethionine (AdoMet) from methionine and ATP. The overall synthetic reaction is composed of two sequential steps, AdoMet formation and the subsequent tripolyphosphate hydrolysis which occurs prior to release of AdoMet from the enzyme.</text>
</comment>
<comment type="catalytic activity">
    <reaction evidence="1">
        <text>L-methionine + ATP + H2O = S-adenosyl-L-methionine + phosphate + diphosphate</text>
        <dbReference type="Rhea" id="RHEA:21080"/>
        <dbReference type="ChEBI" id="CHEBI:15377"/>
        <dbReference type="ChEBI" id="CHEBI:30616"/>
        <dbReference type="ChEBI" id="CHEBI:33019"/>
        <dbReference type="ChEBI" id="CHEBI:43474"/>
        <dbReference type="ChEBI" id="CHEBI:57844"/>
        <dbReference type="ChEBI" id="CHEBI:59789"/>
        <dbReference type="EC" id="2.5.1.6"/>
    </reaction>
</comment>
<comment type="cofactor">
    <cofactor evidence="1">
        <name>Mg(2+)</name>
        <dbReference type="ChEBI" id="CHEBI:18420"/>
    </cofactor>
    <text evidence="1">Binds 2 divalent ions per subunit.</text>
</comment>
<comment type="cofactor">
    <cofactor evidence="1">
        <name>K(+)</name>
        <dbReference type="ChEBI" id="CHEBI:29103"/>
    </cofactor>
    <text evidence="1">Binds 1 potassium ion per subunit.</text>
</comment>
<comment type="pathway">
    <text evidence="1">Amino-acid biosynthesis; S-adenosyl-L-methionine biosynthesis; S-adenosyl-L-methionine from L-methionine: step 1/1.</text>
</comment>
<comment type="subunit">
    <text evidence="1">Homotetramer; dimer of dimers.</text>
</comment>
<comment type="subcellular location">
    <subcellularLocation>
        <location evidence="1">Cytoplasm</location>
    </subcellularLocation>
</comment>
<comment type="similarity">
    <text evidence="1">Belongs to the AdoMet synthase family.</text>
</comment>
<name>METK_PHOPR</name>
<gene>
    <name evidence="1" type="primary">metK</name>
    <name type="ordered locus">PBPRA3134</name>
</gene>
<evidence type="ECO:0000255" key="1">
    <source>
        <dbReference type="HAMAP-Rule" id="MF_00086"/>
    </source>
</evidence>
<feature type="chain" id="PRO_0000174566" description="S-adenosylmethionine synthase">
    <location>
        <begin position="1"/>
        <end position="384"/>
    </location>
</feature>
<feature type="region of interest" description="Flexible loop" evidence="1">
    <location>
        <begin position="99"/>
        <end position="109"/>
    </location>
</feature>
<feature type="binding site" description="in other chain" evidence="1">
    <location>
        <position position="15"/>
    </location>
    <ligand>
        <name>ATP</name>
        <dbReference type="ChEBI" id="CHEBI:30616"/>
        <note>ligand shared between two neighboring subunits</note>
    </ligand>
</feature>
<feature type="binding site" evidence="1">
    <location>
        <position position="17"/>
    </location>
    <ligand>
        <name>Mg(2+)</name>
        <dbReference type="ChEBI" id="CHEBI:18420"/>
    </ligand>
</feature>
<feature type="binding site" evidence="1">
    <location>
        <position position="43"/>
    </location>
    <ligand>
        <name>K(+)</name>
        <dbReference type="ChEBI" id="CHEBI:29103"/>
    </ligand>
</feature>
<feature type="binding site" description="in other chain" evidence="1">
    <location>
        <position position="56"/>
    </location>
    <ligand>
        <name>L-methionine</name>
        <dbReference type="ChEBI" id="CHEBI:57844"/>
        <note>ligand shared between two neighboring subunits</note>
    </ligand>
</feature>
<feature type="binding site" description="in other chain" evidence="1">
    <location>
        <position position="99"/>
    </location>
    <ligand>
        <name>L-methionine</name>
        <dbReference type="ChEBI" id="CHEBI:57844"/>
        <note>ligand shared between two neighboring subunits</note>
    </ligand>
</feature>
<feature type="binding site" description="in other chain" evidence="1">
    <location>
        <begin position="164"/>
        <end position="166"/>
    </location>
    <ligand>
        <name>ATP</name>
        <dbReference type="ChEBI" id="CHEBI:30616"/>
        <note>ligand shared between two neighboring subunits</note>
    </ligand>
</feature>
<feature type="binding site" description="in other chain" evidence="1">
    <location>
        <begin position="230"/>
        <end position="231"/>
    </location>
    <ligand>
        <name>ATP</name>
        <dbReference type="ChEBI" id="CHEBI:30616"/>
        <note>ligand shared between two neighboring subunits</note>
    </ligand>
</feature>
<feature type="binding site" evidence="1">
    <location>
        <position position="239"/>
    </location>
    <ligand>
        <name>ATP</name>
        <dbReference type="ChEBI" id="CHEBI:30616"/>
        <note>ligand shared between two neighboring subunits</note>
    </ligand>
</feature>
<feature type="binding site" evidence="1">
    <location>
        <position position="239"/>
    </location>
    <ligand>
        <name>L-methionine</name>
        <dbReference type="ChEBI" id="CHEBI:57844"/>
        <note>ligand shared between two neighboring subunits</note>
    </ligand>
</feature>
<feature type="binding site" description="in other chain" evidence="1">
    <location>
        <begin position="245"/>
        <end position="246"/>
    </location>
    <ligand>
        <name>ATP</name>
        <dbReference type="ChEBI" id="CHEBI:30616"/>
        <note>ligand shared between two neighboring subunits</note>
    </ligand>
</feature>
<feature type="binding site" evidence="1">
    <location>
        <position position="262"/>
    </location>
    <ligand>
        <name>ATP</name>
        <dbReference type="ChEBI" id="CHEBI:30616"/>
        <note>ligand shared between two neighboring subunits</note>
    </ligand>
</feature>
<feature type="binding site" evidence="1">
    <location>
        <position position="266"/>
    </location>
    <ligand>
        <name>ATP</name>
        <dbReference type="ChEBI" id="CHEBI:30616"/>
        <note>ligand shared between two neighboring subunits</note>
    </ligand>
</feature>
<feature type="binding site" description="in other chain" evidence="1">
    <location>
        <position position="270"/>
    </location>
    <ligand>
        <name>L-methionine</name>
        <dbReference type="ChEBI" id="CHEBI:57844"/>
        <note>ligand shared between two neighboring subunits</note>
    </ligand>
</feature>
<accession>Q6LMM8</accession>
<keyword id="KW-0067">ATP-binding</keyword>
<keyword id="KW-0963">Cytoplasm</keyword>
<keyword id="KW-0460">Magnesium</keyword>
<keyword id="KW-0479">Metal-binding</keyword>
<keyword id="KW-0547">Nucleotide-binding</keyword>
<keyword id="KW-0554">One-carbon metabolism</keyword>
<keyword id="KW-0630">Potassium</keyword>
<keyword id="KW-1185">Reference proteome</keyword>
<keyword id="KW-0808">Transferase</keyword>
<reference key="1">
    <citation type="journal article" date="2005" name="Science">
        <title>Life at depth: Photobacterium profundum genome sequence and expression analysis.</title>
        <authorList>
            <person name="Vezzi A."/>
            <person name="Campanaro S."/>
            <person name="D'Angelo M."/>
            <person name="Simonato F."/>
            <person name="Vitulo N."/>
            <person name="Lauro F.M."/>
            <person name="Cestaro A."/>
            <person name="Malacrida G."/>
            <person name="Simionati B."/>
            <person name="Cannata N."/>
            <person name="Romualdi C."/>
            <person name="Bartlett D.H."/>
            <person name="Valle G."/>
        </authorList>
    </citation>
    <scope>NUCLEOTIDE SEQUENCE [LARGE SCALE GENOMIC DNA]</scope>
    <source>
        <strain>ATCC BAA-1253 / SS9</strain>
    </source>
</reference>
<organism>
    <name type="scientific">Photobacterium profundum (strain SS9)</name>
    <dbReference type="NCBI Taxonomy" id="298386"/>
    <lineage>
        <taxon>Bacteria</taxon>
        <taxon>Pseudomonadati</taxon>
        <taxon>Pseudomonadota</taxon>
        <taxon>Gammaproteobacteria</taxon>
        <taxon>Vibrionales</taxon>
        <taxon>Vibrionaceae</taxon>
        <taxon>Photobacterium</taxon>
    </lineage>
</organism>
<protein>
    <recommendedName>
        <fullName evidence="1">S-adenosylmethionine synthase</fullName>
        <shortName evidence="1">AdoMet synthase</shortName>
        <ecNumber evidence="1">2.5.1.6</ecNumber>
    </recommendedName>
    <alternativeName>
        <fullName evidence="1">MAT</fullName>
    </alternativeName>
    <alternativeName>
        <fullName evidence="1">Methionine adenosyltransferase</fullName>
    </alternativeName>
</protein>
<dbReference type="EC" id="2.5.1.6" evidence="1"/>
<dbReference type="EMBL" id="CR378673">
    <property type="protein sequence ID" value="CAG21449.1"/>
    <property type="molecule type" value="Genomic_DNA"/>
</dbReference>
<dbReference type="RefSeq" id="WP_011219704.1">
    <property type="nucleotide sequence ID" value="NC_006370.1"/>
</dbReference>
<dbReference type="SMR" id="Q6LMM8"/>
<dbReference type="STRING" id="298386.PBPRA3134"/>
<dbReference type="KEGG" id="ppr:PBPRA3134"/>
<dbReference type="eggNOG" id="COG0192">
    <property type="taxonomic scope" value="Bacteria"/>
</dbReference>
<dbReference type="HOGENOM" id="CLU_041802_1_1_6"/>
<dbReference type="UniPathway" id="UPA00315">
    <property type="reaction ID" value="UER00080"/>
</dbReference>
<dbReference type="Proteomes" id="UP000000593">
    <property type="component" value="Chromosome 1"/>
</dbReference>
<dbReference type="GO" id="GO:0005737">
    <property type="term" value="C:cytoplasm"/>
    <property type="evidence" value="ECO:0007669"/>
    <property type="project" value="UniProtKB-SubCell"/>
</dbReference>
<dbReference type="GO" id="GO:0005524">
    <property type="term" value="F:ATP binding"/>
    <property type="evidence" value="ECO:0007669"/>
    <property type="project" value="UniProtKB-UniRule"/>
</dbReference>
<dbReference type="GO" id="GO:0000287">
    <property type="term" value="F:magnesium ion binding"/>
    <property type="evidence" value="ECO:0007669"/>
    <property type="project" value="UniProtKB-UniRule"/>
</dbReference>
<dbReference type="GO" id="GO:0004478">
    <property type="term" value="F:methionine adenosyltransferase activity"/>
    <property type="evidence" value="ECO:0007669"/>
    <property type="project" value="UniProtKB-UniRule"/>
</dbReference>
<dbReference type="GO" id="GO:0006730">
    <property type="term" value="P:one-carbon metabolic process"/>
    <property type="evidence" value="ECO:0007669"/>
    <property type="project" value="UniProtKB-KW"/>
</dbReference>
<dbReference type="GO" id="GO:0006556">
    <property type="term" value="P:S-adenosylmethionine biosynthetic process"/>
    <property type="evidence" value="ECO:0007669"/>
    <property type="project" value="UniProtKB-UniRule"/>
</dbReference>
<dbReference type="CDD" id="cd18079">
    <property type="entry name" value="S-AdoMet_synt"/>
    <property type="match status" value="1"/>
</dbReference>
<dbReference type="FunFam" id="3.30.300.10:FF:000001">
    <property type="entry name" value="S-adenosylmethionine synthase"/>
    <property type="match status" value="1"/>
</dbReference>
<dbReference type="FunFam" id="3.30.300.10:FF:000003">
    <property type="entry name" value="S-adenosylmethionine synthase"/>
    <property type="match status" value="1"/>
</dbReference>
<dbReference type="Gene3D" id="3.30.300.10">
    <property type="match status" value="3"/>
</dbReference>
<dbReference type="HAMAP" id="MF_00086">
    <property type="entry name" value="S_AdoMet_synth1"/>
    <property type="match status" value="1"/>
</dbReference>
<dbReference type="InterPro" id="IPR022631">
    <property type="entry name" value="ADOMET_SYNTHASE_CS"/>
</dbReference>
<dbReference type="InterPro" id="IPR022630">
    <property type="entry name" value="S-AdoMet_synt_C"/>
</dbReference>
<dbReference type="InterPro" id="IPR022629">
    <property type="entry name" value="S-AdoMet_synt_central"/>
</dbReference>
<dbReference type="InterPro" id="IPR022628">
    <property type="entry name" value="S-AdoMet_synt_N"/>
</dbReference>
<dbReference type="InterPro" id="IPR002133">
    <property type="entry name" value="S-AdoMet_synthetase"/>
</dbReference>
<dbReference type="InterPro" id="IPR022636">
    <property type="entry name" value="S-AdoMet_synthetase_sfam"/>
</dbReference>
<dbReference type="NCBIfam" id="TIGR01034">
    <property type="entry name" value="metK"/>
    <property type="match status" value="1"/>
</dbReference>
<dbReference type="PANTHER" id="PTHR11964">
    <property type="entry name" value="S-ADENOSYLMETHIONINE SYNTHETASE"/>
    <property type="match status" value="1"/>
</dbReference>
<dbReference type="Pfam" id="PF02773">
    <property type="entry name" value="S-AdoMet_synt_C"/>
    <property type="match status" value="1"/>
</dbReference>
<dbReference type="Pfam" id="PF02772">
    <property type="entry name" value="S-AdoMet_synt_M"/>
    <property type="match status" value="1"/>
</dbReference>
<dbReference type="Pfam" id="PF00438">
    <property type="entry name" value="S-AdoMet_synt_N"/>
    <property type="match status" value="1"/>
</dbReference>
<dbReference type="PIRSF" id="PIRSF000497">
    <property type="entry name" value="MAT"/>
    <property type="match status" value="1"/>
</dbReference>
<dbReference type="SUPFAM" id="SSF55973">
    <property type="entry name" value="S-adenosylmethionine synthetase"/>
    <property type="match status" value="3"/>
</dbReference>
<dbReference type="PROSITE" id="PS00376">
    <property type="entry name" value="ADOMET_SYNTHASE_1"/>
    <property type="match status" value="1"/>
</dbReference>
<dbReference type="PROSITE" id="PS00377">
    <property type="entry name" value="ADOMET_SYNTHASE_2"/>
    <property type="match status" value="1"/>
</dbReference>
<sequence length="384" mass="42016">MAKHLFTSESVSEGHPDKIADQISDAVLDAILEQDPKARVACETYVKTGMVMVGGEITTSAWVDIEEITRETIREIGYVNSEMGFDANSCAVLSAIGKQSPDINQGVDREDPRELGAGDQGIMFGYASDETDVLMPAPVTYAHRLVQRQAKVRKNGTLPWLRPDAKSQVTFAYDQGKIVGIDAVVLSTQHSDCIDLPVLQEAVMEEIIKPVLPAEWLTKETKFFINPTGRFVIGGPMGDCGLTGRKIIVDTYGGAARHGGGAFSGKDPSKVDRSAAYAARYVAKNIVAAGLASRCEIQLSYAIGVADPTSIMIETFGTEKVSHDIIVDAVRQNFDLRPYGLIEMLDLLQPIYKKTAAYGHFGREEFPWEATDKVEMLRDFANFK</sequence>
<proteinExistence type="inferred from homology"/>